<accession>P49215</accession>
<accession>Q9SWF6</accession>
<reference key="1">
    <citation type="submission" date="1999-06" db="EMBL/GenBank/DDBJ databases">
        <title>Differential expression of Lycopersicon esculentum genes in roots upon colonization by a VA mycorrhizal fungus.</title>
        <authorList>
            <person name="Rosewarne G.M."/>
            <person name="Smith S.E."/>
            <person name="Barker S.J."/>
        </authorList>
    </citation>
    <scope>NUCLEOTIDE SEQUENCE [MRNA]</scope>
    <source>
        <strain>cv. Rio Grande</strain>
    </source>
</reference>
<reference key="2">
    <citation type="submission" date="1994-12" db="EMBL/GenBank/DDBJ databases">
        <authorList>
            <person name="Hartung F."/>
        </authorList>
    </citation>
    <scope>NUCLEOTIDE SEQUENCE [MRNA] OF 58-128</scope>
    <source>
        <strain>cv. Rutgers</strain>
        <tissue>Leaf</tissue>
    </source>
</reference>
<evidence type="ECO:0000250" key="1"/>
<evidence type="ECO:0000305" key="2"/>
<evidence type="ECO:0007829" key="3">
    <source>
        <dbReference type="PDB" id="7QIX"/>
    </source>
</evidence>
<evidence type="ECO:0007829" key="4">
    <source>
        <dbReference type="PDB" id="7QIY"/>
    </source>
</evidence>
<dbReference type="EMBL" id="AF161704">
    <property type="protein sequence ID" value="AAD50774.1"/>
    <property type="molecule type" value="mRNA"/>
</dbReference>
<dbReference type="EMBL" id="X83421">
    <property type="protein sequence ID" value="CAA58444.1"/>
    <property type="molecule type" value="mRNA"/>
</dbReference>
<dbReference type="PIR" id="S51665">
    <property type="entry name" value="S51665"/>
</dbReference>
<dbReference type="RefSeq" id="NP_001234678.1">
    <property type="nucleotide sequence ID" value="NM_001247749.2"/>
</dbReference>
<dbReference type="PDB" id="7QIX">
    <property type="method" value="EM"/>
    <property type="resolution" value="2.53 A"/>
    <property type="chains" value="K=1-144"/>
</dbReference>
<dbReference type="PDB" id="7QIY">
    <property type="method" value="EM"/>
    <property type="resolution" value="2.58 A"/>
    <property type="chains" value="I=1-144"/>
</dbReference>
<dbReference type="PDB" id="7QIZ">
    <property type="method" value="EM"/>
    <property type="resolution" value="2.38 A"/>
    <property type="chains" value="AA=1-144"/>
</dbReference>
<dbReference type="PDBsum" id="7QIX"/>
<dbReference type="PDBsum" id="7QIY"/>
<dbReference type="PDBsum" id="7QIZ"/>
<dbReference type="EMDB" id="EMD-14002"/>
<dbReference type="EMDB" id="EMD-14003"/>
<dbReference type="EMDB" id="EMD-14004"/>
<dbReference type="SMR" id="P49215"/>
<dbReference type="FunCoup" id="P49215">
    <property type="interactions" value="2696"/>
</dbReference>
<dbReference type="STRING" id="4081.P49215"/>
<dbReference type="PaxDb" id="4081-Solyc05g055230.1.1"/>
<dbReference type="EnsemblPlants" id="Solyc05g055230.2.1">
    <property type="protein sequence ID" value="Solyc05g055230.2.1.1"/>
    <property type="gene ID" value="Solyc05g055230.2"/>
</dbReference>
<dbReference type="GeneID" id="544221"/>
<dbReference type="Gramene" id="Solyc05g055230.2.1">
    <property type="protein sequence ID" value="Solyc05g055230.2.1.1"/>
    <property type="gene ID" value="Solyc05g055230.2"/>
</dbReference>
<dbReference type="KEGG" id="sly:544221"/>
<dbReference type="eggNOG" id="KOG0187">
    <property type="taxonomic scope" value="Eukaryota"/>
</dbReference>
<dbReference type="HOGENOM" id="CLU_112958_2_0_1"/>
<dbReference type="InParanoid" id="P49215"/>
<dbReference type="OMA" id="MKRIQQG"/>
<dbReference type="OrthoDB" id="1727351at2759"/>
<dbReference type="PhylomeDB" id="P49215"/>
<dbReference type="Proteomes" id="UP000004994">
    <property type="component" value="Chromosome 5"/>
</dbReference>
<dbReference type="GO" id="GO:1990904">
    <property type="term" value="C:ribonucleoprotein complex"/>
    <property type="evidence" value="ECO:0007669"/>
    <property type="project" value="UniProtKB-KW"/>
</dbReference>
<dbReference type="GO" id="GO:0005840">
    <property type="term" value="C:ribosome"/>
    <property type="evidence" value="ECO:0007669"/>
    <property type="project" value="UniProtKB-KW"/>
</dbReference>
<dbReference type="GO" id="GO:0003735">
    <property type="term" value="F:structural constituent of ribosome"/>
    <property type="evidence" value="ECO:0007669"/>
    <property type="project" value="InterPro"/>
</dbReference>
<dbReference type="GO" id="GO:0006412">
    <property type="term" value="P:translation"/>
    <property type="evidence" value="ECO:0007669"/>
    <property type="project" value="InterPro"/>
</dbReference>
<dbReference type="FunFam" id="1.10.60.20:FF:000001">
    <property type="entry name" value="40S ribosomal protein S17"/>
    <property type="match status" value="1"/>
</dbReference>
<dbReference type="Gene3D" id="1.10.60.20">
    <property type="entry name" value="Ribosomal protein S17e-like"/>
    <property type="match status" value="1"/>
</dbReference>
<dbReference type="HAMAP" id="MF_00511">
    <property type="entry name" value="Ribosomal_eS17"/>
    <property type="match status" value="1"/>
</dbReference>
<dbReference type="InterPro" id="IPR001210">
    <property type="entry name" value="Ribosomal_eS17"/>
</dbReference>
<dbReference type="InterPro" id="IPR018273">
    <property type="entry name" value="Ribosomal_eS17_CS"/>
</dbReference>
<dbReference type="InterPro" id="IPR036401">
    <property type="entry name" value="Ribosomal_eS17_sf"/>
</dbReference>
<dbReference type="PANTHER" id="PTHR10732">
    <property type="entry name" value="40S RIBOSOMAL PROTEIN S17"/>
    <property type="match status" value="1"/>
</dbReference>
<dbReference type="PANTHER" id="PTHR10732:SF26">
    <property type="entry name" value="SMALL RIBOSOMAL SUBUNIT PROTEIN ES17W"/>
    <property type="match status" value="1"/>
</dbReference>
<dbReference type="Pfam" id="PF00833">
    <property type="entry name" value="Ribosomal_S17e"/>
    <property type="match status" value="1"/>
</dbReference>
<dbReference type="SUPFAM" id="SSF116820">
    <property type="entry name" value="Rps17e-like"/>
    <property type="match status" value="1"/>
</dbReference>
<dbReference type="PROSITE" id="PS00712">
    <property type="entry name" value="RIBOSOMAL_S17E"/>
    <property type="match status" value="1"/>
</dbReference>
<sequence>MGRVRTKTVKKSSRQVIERYYSKMTLDFHTNKKILEEVAIIPSKRLRNKIAGFSTHLMKRIQKGPVRGISLKLQEEERERRMDFVPDESAIKTDLIEVDKETLDMLSALGMSDLPGVVKQAAEPQAVAALPSYGRGGGGFGRKY</sequence>
<protein>
    <recommendedName>
        <fullName evidence="2">Small ribosomal subunit protein eS17</fullName>
    </recommendedName>
    <alternativeName>
        <fullName>40S ribosomal protein S17</fullName>
    </alternativeName>
</protein>
<proteinExistence type="evidence at protein level"/>
<keyword id="KW-0002">3D-structure</keyword>
<keyword id="KW-1185">Reference proteome</keyword>
<keyword id="KW-0687">Ribonucleoprotein</keyword>
<keyword id="KW-0689">Ribosomal protein</keyword>
<gene>
    <name type="primary">RPS17</name>
    <name type="synonym">GI1</name>
</gene>
<organism>
    <name type="scientific">Solanum lycopersicum</name>
    <name type="common">Tomato</name>
    <name type="synonym">Lycopersicon esculentum</name>
    <dbReference type="NCBI Taxonomy" id="4081"/>
    <lineage>
        <taxon>Eukaryota</taxon>
        <taxon>Viridiplantae</taxon>
        <taxon>Streptophyta</taxon>
        <taxon>Embryophyta</taxon>
        <taxon>Tracheophyta</taxon>
        <taxon>Spermatophyta</taxon>
        <taxon>Magnoliopsida</taxon>
        <taxon>eudicotyledons</taxon>
        <taxon>Gunneridae</taxon>
        <taxon>Pentapetalae</taxon>
        <taxon>asterids</taxon>
        <taxon>lamiids</taxon>
        <taxon>Solanales</taxon>
        <taxon>Solanaceae</taxon>
        <taxon>Solanoideae</taxon>
        <taxon>Solaneae</taxon>
        <taxon>Solanum</taxon>
        <taxon>Solanum subgen. Lycopersicon</taxon>
    </lineage>
</organism>
<feature type="initiator methionine" description="Removed" evidence="1">
    <location>
        <position position="1"/>
    </location>
</feature>
<feature type="chain" id="PRO_0000141542" description="Small ribosomal subunit protein eS17">
    <location>
        <begin position="2"/>
        <end position="144"/>
    </location>
</feature>
<feature type="sequence conflict" description="In Ref. 2; CAA58444." evidence="2" ref="2">
    <original>V</original>
    <variation>F</variation>
    <location>
        <position position="98"/>
    </location>
</feature>
<feature type="helix" evidence="4">
    <location>
        <begin position="7"/>
        <end position="19"/>
    </location>
</feature>
<feature type="turn" evidence="4">
    <location>
        <begin position="21"/>
        <end position="23"/>
    </location>
</feature>
<feature type="helix" evidence="4">
    <location>
        <begin position="28"/>
        <end position="38"/>
    </location>
</feature>
<feature type="helix" evidence="4">
    <location>
        <begin position="44"/>
        <end position="63"/>
    </location>
</feature>
<feature type="turn" evidence="3">
    <location>
        <begin position="79"/>
        <end position="83"/>
    </location>
</feature>
<feature type="strand" evidence="3">
    <location>
        <begin position="93"/>
        <end position="98"/>
    </location>
</feature>
<feature type="helix" evidence="3">
    <location>
        <begin position="100"/>
        <end position="108"/>
    </location>
</feature>
<feature type="strand" evidence="3">
    <location>
        <begin position="115"/>
        <end position="119"/>
    </location>
</feature>
<comment type="similarity">
    <text evidence="2">Belongs to the eukaryotic ribosomal protein eS17 family.</text>
</comment>
<name>RS17_SOLLC</name>